<geneLocation type="mitochondrion"/>
<feature type="chain" id="PRO_0000183768" description="Cytochrome c oxidase subunit 3">
    <location>
        <begin position="1"/>
        <end position="74" status="greater than"/>
    </location>
</feature>
<feature type="transmembrane region" description="Helical" evidence="2">
    <location>
        <begin position="15"/>
        <end position="37"/>
    </location>
</feature>
<feature type="transmembrane region" description="Helical" evidence="2">
    <location>
        <begin position="42"/>
        <end position="59"/>
    </location>
</feature>
<feature type="non-terminal residue">
    <location>
        <position position="74"/>
    </location>
</feature>
<gene>
    <name type="primary">mt:CoIII</name>
    <name type="synonym">CoIII</name>
</gene>
<proteinExistence type="inferred from homology"/>
<accession>P50271</accession>
<sequence>MSTHSNHPFHLVDYSPWPLTGAIGAMTTVSGMVKWFHQYDMSLFLLGNIITILTVYQWWRDVSREGTYQGLHTY</sequence>
<keyword id="KW-0472">Membrane</keyword>
<keyword id="KW-0496">Mitochondrion</keyword>
<keyword id="KW-0999">Mitochondrion inner membrane</keyword>
<keyword id="KW-1278">Translocase</keyword>
<keyword id="KW-0812">Transmembrane</keyword>
<keyword id="KW-1133">Transmembrane helix</keyword>
<comment type="function">
    <text evidence="1">Component of the cytochrome c oxidase, the last enzyme in the mitochondrial electron transport chain which drives oxidative phosphorylation. The respiratory chain contains 3 multisubunit complexes succinate dehydrogenase (complex II, CII), ubiquinol-cytochrome c oxidoreductase (cytochrome b-c1 complex, complex III, CIII) and cytochrome c oxidase (complex IV, CIV), that cooperate to transfer electrons derived from NADH and succinate to molecular oxygen, creating an electrochemical gradient over the inner membrane that drives transmembrane transport and the ATP synthase. Cytochrome c oxidase is the component of the respiratory chain that catalyzes the reduction of oxygen to water. Electrons originating from reduced cytochrome c in the intermembrane space (IMS) are transferred via the dinuclear copper A center (CU(A)) of subunit 2 and heme A of subunit 1 to the active site in subunit 1, a binuclear center (BNC) formed by heme A3 and copper B (CU(B)). The BNC reduces molecular oxygen to 2 water molecules using 4 electrons from cytochrome c in the IMS and 4 protons from the mitochondrial matrix.</text>
</comment>
<comment type="catalytic activity">
    <reaction evidence="1">
        <text>4 Fe(II)-[cytochrome c] + O2 + 8 H(+)(in) = 4 Fe(III)-[cytochrome c] + 2 H2O + 4 H(+)(out)</text>
        <dbReference type="Rhea" id="RHEA:11436"/>
        <dbReference type="Rhea" id="RHEA-COMP:10350"/>
        <dbReference type="Rhea" id="RHEA-COMP:14399"/>
        <dbReference type="ChEBI" id="CHEBI:15377"/>
        <dbReference type="ChEBI" id="CHEBI:15378"/>
        <dbReference type="ChEBI" id="CHEBI:15379"/>
        <dbReference type="ChEBI" id="CHEBI:29033"/>
        <dbReference type="ChEBI" id="CHEBI:29034"/>
        <dbReference type="EC" id="7.1.1.9"/>
    </reaction>
    <physiologicalReaction direction="left-to-right" evidence="1">
        <dbReference type="Rhea" id="RHEA:11437"/>
    </physiologicalReaction>
</comment>
<comment type="subunit">
    <text evidence="1">Component of the cytochrome c oxidase (complex IV, CIV), a multisubunit enzyme composed of a catalytic core of 3 subunits and several supernumerary subunits. The complex exists as a monomer or a dimer and forms supercomplexes (SCs) in the inner mitochondrial membrane with ubiquinol-cytochrome c oxidoreductase (cytochrome b-c1 complex, complex III, CIII).</text>
</comment>
<comment type="subcellular location">
    <subcellularLocation>
        <location evidence="1">Mitochondrion inner membrane</location>
        <topology evidence="1">Multi-pass membrane protein</topology>
    </subcellularLocation>
</comment>
<comment type="similarity">
    <text evidence="3">Belongs to the cytochrome c oxidase subunit 3 family.</text>
</comment>
<reference key="1">
    <citation type="journal article" date="1993" name="Genet. Res.">
        <title>Evolution of the mitochondrial ATPase 6 gene in Drosophila: unusually high level of polymorphism in D. melanogaster.</title>
        <authorList>
            <person name="Kaneko M."/>
            <person name="Satta Y."/>
            <person name="Matsuura E.T."/>
            <person name="Chigusa S.I."/>
        </authorList>
    </citation>
    <scope>NUCLEOTIDE SEQUENCE [GENOMIC DNA]</scope>
</reference>
<organism>
    <name type="scientific">Drosophila simulans</name>
    <name type="common">Fruit fly</name>
    <dbReference type="NCBI Taxonomy" id="7240"/>
    <lineage>
        <taxon>Eukaryota</taxon>
        <taxon>Metazoa</taxon>
        <taxon>Ecdysozoa</taxon>
        <taxon>Arthropoda</taxon>
        <taxon>Hexapoda</taxon>
        <taxon>Insecta</taxon>
        <taxon>Pterygota</taxon>
        <taxon>Neoptera</taxon>
        <taxon>Endopterygota</taxon>
        <taxon>Diptera</taxon>
        <taxon>Brachycera</taxon>
        <taxon>Muscomorpha</taxon>
        <taxon>Ephydroidea</taxon>
        <taxon>Drosophilidae</taxon>
        <taxon>Drosophila</taxon>
        <taxon>Sophophora</taxon>
    </lineage>
</organism>
<dbReference type="EC" id="7.1.1.9"/>
<dbReference type="EMBL" id="S64977">
    <property type="protein sequence ID" value="AAD13959.1"/>
    <property type="molecule type" value="Genomic_DNA"/>
</dbReference>
<dbReference type="SMR" id="P50271"/>
<dbReference type="GO" id="GO:0005743">
    <property type="term" value="C:mitochondrial inner membrane"/>
    <property type="evidence" value="ECO:0007669"/>
    <property type="project" value="UniProtKB-SubCell"/>
</dbReference>
<dbReference type="GO" id="GO:0004129">
    <property type="term" value="F:cytochrome-c oxidase activity"/>
    <property type="evidence" value="ECO:0007669"/>
    <property type="project" value="UniProtKB-EC"/>
</dbReference>
<dbReference type="GO" id="GO:0006123">
    <property type="term" value="P:mitochondrial electron transport, cytochrome c to oxygen"/>
    <property type="evidence" value="ECO:0007669"/>
    <property type="project" value="TreeGrafter"/>
</dbReference>
<dbReference type="FunFam" id="1.10.287.70:FF:000048">
    <property type="entry name" value="Cytochrome c oxidase subunit 3"/>
    <property type="match status" value="1"/>
</dbReference>
<dbReference type="Gene3D" id="1.10.287.70">
    <property type="match status" value="1"/>
</dbReference>
<dbReference type="InterPro" id="IPR024791">
    <property type="entry name" value="Cyt_c/ubiquinol_Oxase_su3"/>
</dbReference>
<dbReference type="InterPro" id="IPR000298">
    <property type="entry name" value="Cyt_c_oxidase-like_su3"/>
</dbReference>
<dbReference type="InterPro" id="IPR035973">
    <property type="entry name" value="Cyt_c_oxidase_su3-like_sf"/>
</dbReference>
<dbReference type="PANTHER" id="PTHR11403:SF7">
    <property type="entry name" value="CYTOCHROME C OXIDASE SUBUNIT 3"/>
    <property type="match status" value="1"/>
</dbReference>
<dbReference type="PANTHER" id="PTHR11403">
    <property type="entry name" value="CYTOCHROME C OXIDASE SUBUNIT III"/>
    <property type="match status" value="1"/>
</dbReference>
<dbReference type="Pfam" id="PF00510">
    <property type="entry name" value="COX3"/>
    <property type="match status" value="1"/>
</dbReference>
<dbReference type="SUPFAM" id="SSF81452">
    <property type="entry name" value="Cytochrome c oxidase subunit III-like"/>
    <property type="match status" value="1"/>
</dbReference>
<dbReference type="PROSITE" id="PS50253">
    <property type="entry name" value="COX3"/>
    <property type="match status" value="1"/>
</dbReference>
<protein>
    <recommendedName>
        <fullName>Cytochrome c oxidase subunit 3</fullName>
        <ecNumber>7.1.1.9</ecNumber>
    </recommendedName>
    <alternativeName>
        <fullName>Cytochrome c oxidase polypeptide III</fullName>
    </alternativeName>
</protein>
<evidence type="ECO:0000250" key="1">
    <source>
        <dbReference type="UniProtKB" id="P00420"/>
    </source>
</evidence>
<evidence type="ECO:0000255" key="2"/>
<evidence type="ECO:0000305" key="3"/>
<name>COX3_DROSI</name>